<accession>C3MBD2</accession>
<comment type="function">
    <text evidence="1">Involved in the glycolate utilization. Catalyzes the condensation and subsequent hydrolysis of acetyl-coenzyme A (acetyl-CoA) and glyoxylate to form malate and CoA.</text>
</comment>
<comment type="catalytic activity">
    <reaction evidence="1">
        <text>glyoxylate + acetyl-CoA + H2O = (S)-malate + CoA + H(+)</text>
        <dbReference type="Rhea" id="RHEA:18181"/>
        <dbReference type="ChEBI" id="CHEBI:15377"/>
        <dbReference type="ChEBI" id="CHEBI:15378"/>
        <dbReference type="ChEBI" id="CHEBI:15589"/>
        <dbReference type="ChEBI" id="CHEBI:36655"/>
        <dbReference type="ChEBI" id="CHEBI:57287"/>
        <dbReference type="ChEBI" id="CHEBI:57288"/>
        <dbReference type="EC" id="2.3.3.9"/>
    </reaction>
</comment>
<comment type="cofactor">
    <cofactor evidence="1">
        <name>Mg(2+)</name>
        <dbReference type="ChEBI" id="CHEBI:18420"/>
    </cofactor>
</comment>
<comment type="pathway">
    <text evidence="1">Carbohydrate metabolism; glyoxylate cycle; (S)-malate from isocitrate: step 2/2.</text>
</comment>
<comment type="subunit">
    <text evidence="1">Monomer.</text>
</comment>
<comment type="subcellular location">
    <subcellularLocation>
        <location evidence="1">Cytoplasm</location>
    </subcellularLocation>
</comment>
<comment type="similarity">
    <text evidence="1">Belongs to the malate synthase family. GlcB subfamily.</text>
</comment>
<keyword id="KW-0963">Cytoplasm</keyword>
<keyword id="KW-0329">Glyoxylate bypass</keyword>
<keyword id="KW-0460">Magnesium</keyword>
<keyword id="KW-0479">Metal-binding</keyword>
<keyword id="KW-0558">Oxidation</keyword>
<keyword id="KW-1185">Reference proteome</keyword>
<keyword id="KW-0808">Transferase</keyword>
<keyword id="KW-0816">Tricarboxylic acid cycle</keyword>
<sequence>MDRVEKHDLKIDAGLHRFLVDEAMPGTGIDPEHFFAALSALVHDLAPKNRALLARRDELQAKLDAWYREHGAPVDLDAYQAFLKEIGYLLPEGPDFSVSTANVDAEIATIAGPQLVVPVMNARYALNAANARWGSLYDALYGTDAIPDADGGTRGRSYNPARGAKVIAWARDFLDASVPLAAGRWSDVGGLAIDGTALSLTLTNGTKTTLRNPAQFAGYSGSAEAPSQIVLRQNNLHVVIVLDATTPIGQADPAGISDIILESAITTIMDCEDSVAAVDAEDKVVVYRNWLGLMKGDLAEEVAKGGRTFTRKLNADRVFTRPNGETLTLPGRALMLVRNVGHLMTNPAILDRDGREVPEGLMDAMVTALIALHDIGANGRRANSRAGSMYVVKPKMHGPEEVAFACEIFSHVEAALGLPENTIKMGIMDEERRTTVNLKECIRAARDRVVFINTGFLDRTGDEIHTSMEAGPMIRKGDMKQAAWIGAYENWNVDIGLECGLSGRAQIGKGMWAMPDLMAAMLEQKIAHPKAGANTAWVPSPTAATLHATHYHRVDVAEVQAGLGSRPRARLADILSVPVAARPNWTEEEIQRELDNNAQGILGYVVRWVDEGVGCSKVPDINNVGLMEDRATLRISAQHMANWLHHGIVSKVQIVETMKRMAEIVDRQNAGDPSYVPMAGRLEQSIAFQAALDLVLKGREQPNGYTEPVLHRRRLELKAKQRAS</sequence>
<proteinExistence type="inferred from homology"/>
<name>MASZ_SINFN</name>
<feature type="chain" id="PRO_1000147427" description="Malate synthase G">
    <location>
        <begin position="1"/>
        <end position="724"/>
    </location>
</feature>
<feature type="active site" description="Proton acceptor" evidence="1">
    <location>
        <position position="338"/>
    </location>
</feature>
<feature type="active site" description="Proton donor" evidence="1">
    <location>
        <position position="629"/>
    </location>
</feature>
<feature type="binding site" evidence="1">
    <location>
        <position position="116"/>
    </location>
    <ligand>
        <name>acetyl-CoA</name>
        <dbReference type="ChEBI" id="CHEBI:57288"/>
    </ligand>
</feature>
<feature type="binding site" evidence="1">
    <location>
        <begin position="123"/>
        <end position="124"/>
    </location>
    <ligand>
        <name>acetyl-CoA</name>
        <dbReference type="ChEBI" id="CHEBI:57288"/>
    </ligand>
</feature>
<feature type="binding site" evidence="1">
    <location>
        <position position="274"/>
    </location>
    <ligand>
        <name>acetyl-CoA</name>
        <dbReference type="ChEBI" id="CHEBI:57288"/>
    </ligand>
</feature>
<feature type="binding site" evidence="1">
    <location>
        <position position="311"/>
    </location>
    <ligand>
        <name>acetyl-CoA</name>
        <dbReference type="ChEBI" id="CHEBI:57288"/>
    </ligand>
</feature>
<feature type="binding site" evidence="1">
    <location>
        <position position="338"/>
    </location>
    <ligand>
        <name>glyoxylate</name>
        <dbReference type="ChEBI" id="CHEBI:36655"/>
    </ligand>
</feature>
<feature type="binding site" evidence="1">
    <location>
        <position position="430"/>
    </location>
    <ligand>
        <name>glyoxylate</name>
        <dbReference type="ChEBI" id="CHEBI:36655"/>
    </ligand>
</feature>
<feature type="binding site" evidence="1">
    <location>
        <position position="430"/>
    </location>
    <ligand>
        <name>Mg(2+)</name>
        <dbReference type="ChEBI" id="CHEBI:18420"/>
    </ligand>
</feature>
<feature type="binding site" evidence="1">
    <location>
        <begin position="455"/>
        <end position="458"/>
    </location>
    <ligand>
        <name>glyoxylate</name>
        <dbReference type="ChEBI" id="CHEBI:36655"/>
    </ligand>
</feature>
<feature type="binding site" evidence="1">
    <location>
        <position position="458"/>
    </location>
    <ligand>
        <name>Mg(2+)</name>
        <dbReference type="ChEBI" id="CHEBI:18420"/>
    </ligand>
</feature>
<feature type="binding site" evidence="1">
    <location>
        <position position="539"/>
    </location>
    <ligand>
        <name>acetyl-CoA</name>
        <dbReference type="ChEBI" id="CHEBI:57288"/>
    </ligand>
</feature>
<feature type="modified residue" description="Cysteine sulfenic acid (-SOH)" evidence="1">
    <location>
        <position position="615"/>
    </location>
</feature>
<organism>
    <name type="scientific">Sinorhizobium fredii (strain NBRC 101917 / NGR234)</name>
    <dbReference type="NCBI Taxonomy" id="394"/>
    <lineage>
        <taxon>Bacteria</taxon>
        <taxon>Pseudomonadati</taxon>
        <taxon>Pseudomonadota</taxon>
        <taxon>Alphaproteobacteria</taxon>
        <taxon>Hyphomicrobiales</taxon>
        <taxon>Rhizobiaceae</taxon>
        <taxon>Sinorhizobium/Ensifer group</taxon>
        <taxon>Sinorhizobium</taxon>
    </lineage>
</organism>
<gene>
    <name evidence="1" type="primary">glcB</name>
    <name type="ordered locus">NGR_c34110</name>
</gene>
<evidence type="ECO:0000255" key="1">
    <source>
        <dbReference type="HAMAP-Rule" id="MF_00641"/>
    </source>
</evidence>
<protein>
    <recommendedName>
        <fullName evidence="1">Malate synthase G</fullName>
        <ecNumber evidence="1">2.3.3.9</ecNumber>
    </recommendedName>
</protein>
<reference key="1">
    <citation type="journal article" date="2009" name="Appl. Environ. Microbiol.">
        <title>Rhizobium sp. strain NGR234 possesses a remarkable number of secretion systems.</title>
        <authorList>
            <person name="Schmeisser C."/>
            <person name="Liesegang H."/>
            <person name="Krysciak D."/>
            <person name="Bakkou N."/>
            <person name="Le Quere A."/>
            <person name="Wollherr A."/>
            <person name="Heinemeyer I."/>
            <person name="Morgenstern B."/>
            <person name="Pommerening-Roeser A."/>
            <person name="Flores M."/>
            <person name="Palacios R."/>
            <person name="Brenner S."/>
            <person name="Gottschalk G."/>
            <person name="Schmitz R.A."/>
            <person name="Broughton W.J."/>
            <person name="Perret X."/>
            <person name="Strittmatter A.W."/>
            <person name="Streit W.R."/>
        </authorList>
    </citation>
    <scope>NUCLEOTIDE SEQUENCE [LARGE SCALE GENOMIC DNA]</scope>
    <source>
        <strain>NBRC 101917 / NGR234</strain>
    </source>
</reference>
<dbReference type="EC" id="2.3.3.9" evidence="1"/>
<dbReference type="EMBL" id="CP001389">
    <property type="protein sequence ID" value="ACP27141.1"/>
    <property type="molecule type" value="Genomic_DNA"/>
</dbReference>
<dbReference type="RefSeq" id="WP_012709888.1">
    <property type="nucleotide sequence ID" value="NC_012587.1"/>
</dbReference>
<dbReference type="RefSeq" id="YP_002827894.1">
    <property type="nucleotide sequence ID" value="NC_012587.1"/>
</dbReference>
<dbReference type="SMR" id="C3MBD2"/>
<dbReference type="STRING" id="394.NGR_c34110"/>
<dbReference type="KEGG" id="rhi:NGR_c34110"/>
<dbReference type="PATRIC" id="fig|394.7.peg.6262"/>
<dbReference type="eggNOG" id="COG2225">
    <property type="taxonomic scope" value="Bacteria"/>
</dbReference>
<dbReference type="HOGENOM" id="CLU_028446_1_0_5"/>
<dbReference type="OrthoDB" id="9762054at2"/>
<dbReference type="UniPathway" id="UPA00703">
    <property type="reaction ID" value="UER00720"/>
</dbReference>
<dbReference type="Proteomes" id="UP000001054">
    <property type="component" value="Chromosome"/>
</dbReference>
<dbReference type="GO" id="GO:0005829">
    <property type="term" value="C:cytosol"/>
    <property type="evidence" value="ECO:0007669"/>
    <property type="project" value="TreeGrafter"/>
</dbReference>
<dbReference type="GO" id="GO:0000287">
    <property type="term" value="F:magnesium ion binding"/>
    <property type="evidence" value="ECO:0007669"/>
    <property type="project" value="TreeGrafter"/>
</dbReference>
<dbReference type="GO" id="GO:0004474">
    <property type="term" value="F:malate synthase activity"/>
    <property type="evidence" value="ECO:0007669"/>
    <property type="project" value="UniProtKB-UniRule"/>
</dbReference>
<dbReference type="GO" id="GO:0009436">
    <property type="term" value="P:glyoxylate catabolic process"/>
    <property type="evidence" value="ECO:0007669"/>
    <property type="project" value="TreeGrafter"/>
</dbReference>
<dbReference type="GO" id="GO:0006097">
    <property type="term" value="P:glyoxylate cycle"/>
    <property type="evidence" value="ECO:0007669"/>
    <property type="project" value="UniProtKB-UniRule"/>
</dbReference>
<dbReference type="GO" id="GO:0006099">
    <property type="term" value="P:tricarboxylic acid cycle"/>
    <property type="evidence" value="ECO:0007669"/>
    <property type="project" value="UniProtKB-KW"/>
</dbReference>
<dbReference type="CDD" id="cd00728">
    <property type="entry name" value="malate_synt_G"/>
    <property type="match status" value="1"/>
</dbReference>
<dbReference type="FunFam" id="3.20.20.360:FF:000002">
    <property type="entry name" value="Malate synthase G"/>
    <property type="match status" value="1"/>
</dbReference>
<dbReference type="Gene3D" id="3.20.20.360">
    <property type="entry name" value="Malate synthase, domain 3"/>
    <property type="match status" value="2"/>
</dbReference>
<dbReference type="Gene3D" id="1.20.1220.12">
    <property type="entry name" value="Malate synthase, domain III"/>
    <property type="match status" value="1"/>
</dbReference>
<dbReference type="HAMAP" id="MF_00641">
    <property type="entry name" value="Malate_synth_G"/>
    <property type="match status" value="1"/>
</dbReference>
<dbReference type="InterPro" id="IPR044856">
    <property type="entry name" value="Malate_synth_C_sf"/>
</dbReference>
<dbReference type="InterPro" id="IPR011076">
    <property type="entry name" value="Malate_synth_sf"/>
</dbReference>
<dbReference type="InterPro" id="IPR001465">
    <property type="entry name" value="Malate_synthase_TIM"/>
</dbReference>
<dbReference type="InterPro" id="IPR006253">
    <property type="entry name" value="Malate_synthG"/>
</dbReference>
<dbReference type="InterPro" id="IPR048355">
    <property type="entry name" value="MS_C"/>
</dbReference>
<dbReference type="InterPro" id="IPR048356">
    <property type="entry name" value="MS_N"/>
</dbReference>
<dbReference type="InterPro" id="IPR046363">
    <property type="entry name" value="MS_N_TIM-barrel_dom"/>
</dbReference>
<dbReference type="InterPro" id="IPR048357">
    <property type="entry name" value="MSG_insertion"/>
</dbReference>
<dbReference type="NCBIfam" id="TIGR01345">
    <property type="entry name" value="malate_syn_G"/>
    <property type="match status" value="1"/>
</dbReference>
<dbReference type="NCBIfam" id="NF002825">
    <property type="entry name" value="PRK02999.1"/>
    <property type="match status" value="1"/>
</dbReference>
<dbReference type="PANTHER" id="PTHR42739">
    <property type="entry name" value="MALATE SYNTHASE G"/>
    <property type="match status" value="1"/>
</dbReference>
<dbReference type="PANTHER" id="PTHR42739:SF1">
    <property type="entry name" value="MALATE SYNTHASE G"/>
    <property type="match status" value="1"/>
</dbReference>
<dbReference type="Pfam" id="PF20659">
    <property type="entry name" value="MS_C"/>
    <property type="match status" value="1"/>
</dbReference>
<dbReference type="Pfam" id="PF20656">
    <property type="entry name" value="MS_N"/>
    <property type="match status" value="1"/>
</dbReference>
<dbReference type="Pfam" id="PF01274">
    <property type="entry name" value="MS_TIM-barrel"/>
    <property type="match status" value="1"/>
</dbReference>
<dbReference type="Pfam" id="PF20658">
    <property type="entry name" value="MSG_insertion"/>
    <property type="match status" value="1"/>
</dbReference>
<dbReference type="SUPFAM" id="SSF51645">
    <property type="entry name" value="Malate synthase G"/>
    <property type="match status" value="1"/>
</dbReference>